<proteinExistence type="inferred from homology"/>
<feature type="chain" id="PRO_0000390704" description="Serine/threonine-protein phosphatase Pgam5, mitochondrial">
    <location>
        <begin position="1"/>
        <end position="289"/>
    </location>
</feature>
<feature type="transmembrane region" description="Helical" evidence="3">
    <location>
        <begin position="7"/>
        <end position="23"/>
    </location>
</feature>
<evidence type="ECO:0000250" key="1"/>
<evidence type="ECO:0000250" key="2">
    <source>
        <dbReference type="UniProtKB" id="O46084"/>
    </source>
</evidence>
<evidence type="ECO:0000255" key="3"/>
<evidence type="ECO:0000312" key="4">
    <source>
        <dbReference type="EMBL" id="EDV45526.1"/>
    </source>
</evidence>
<dbReference type="EC" id="3.1.3.16"/>
<dbReference type="EMBL" id="CH954183">
    <property type="protein sequence ID" value="EDV45526.1"/>
    <property type="molecule type" value="Genomic_DNA"/>
</dbReference>
<dbReference type="SMR" id="B3P9N0"/>
<dbReference type="EnsemblMetazoa" id="FBtr0132729">
    <property type="protein sequence ID" value="FBpp0131221"/>
    <property type="gene ID" value="FBgn0104963"/>
</dbReference>
<dbReference type="EnsemblMetazoa" id="XM_001982521.3">
    <property type="protein sequence ID" value="XP_001982557.1"/>
    <property type="gene ID" value="LOC6555713"/>
</dbReference>
<dbReference type="GeneID" id="6555713"/>
<dbReference type="KEGG" id="der:6555713"/>
<dbReference type="CTD" id="192111"/>
<dbReference type="eggNOG" id="KOG4609">
    <property type="taxonomic scope" value="Eukaryota"/>
</dbReference>
<dbReference type="HOGENOM" id="CLU_063130_0_1_1"/>
<dbReference type="OMA" id="QLPLFAW"/>
<dbReference type="OrthoDB" id="2118094at2759"/>
<dbReference type="PhylomeDB" id="B3P9N0"/>
<dbReference type="Proteomes" id="UP000008711">
    <property type="component" value="Unassembled WGS sequence"/>
</dbReference>
<dbReference type="GO" id="GO:0005741">
    <property type="term" value="C:mitochondrial outer membrane"/>
    <property type="evidence" value="ECO:0007669"/>
    <property type="project" value="UniProtKB-SubCell"/>
</dbReference>
<dbReference type="GO" id="GO:0019900">
    <property type="term" value="F:kinase binding"/>
    <property type="evidence" value="ECO:0007669"/>
    <property type="project" value="EnsemblMetazoa"/>
</dbReference>
<dbReference type="GO" id="GO:0004721">
    <property type="term" value="F:phosphoprotein phosphatase activity"/>
    <property type="evidence" value="ECO:0000250"/>
    <property type="project" value="UniProtKB"/>
</dbReference>
<dbReference type="GO" id="GO:0043539">
    <property type="term" value="F:protein serine/threonine kinase activator activity"/>
    <property type="evidence" value="ECO:0007669"/>
    <property type="project" value="EnsemblMetazoa"/>
</dbReference>
<dbReference type="GO" id="GO:0004722">
    <property type="term" value="F:protein serine/threonine phosphatase activity"/>
    <property type="evidence" value="ECO:0007669"/>
    <property type="project" value="UniProtKB-EC"/>
</dbReference>
<dbReference type="GO" id="GO:0090141">
    <property type="term" value="P:positive regulation of mitochondrial fission"/>
    <property type="evidence" value="ECO:0007669"/>
    <property type="project" value="EnsemblMetazoa"/>
</dbReference>
<dbReference type="GO" id="GO:0010636">
    <property type="term" value="P:positive regulation of mitochondrial fusion"/>
    <property type="evidence" value="ECO:0007669"/>
    <property type="project" value="EnsemblMetazoa"/>
</dbReference>
<dbReference type="GO" id="GO:0006470">
    <property type="term" value="P:protein dephosphorylation"/>
    <property type="evidence" value="ECO:0000250"/>
    <property type="project" value="UniProtKB"/>
</dbReference>
<dbReference type="GO" id="GO:0072347">
    <property type="term" value="P:response to anesthetic"/>
    <property type="evidence" value="ECO:0007669"/>
    <property type="project" value="EnsemblMetazoa"/>
</dbReference>
<dbReference type="GO" id="GO:0009408">
    <property type="term" value="P:response to heat"/>
    <property type="evidence" value="ECO:0007669"/>
    <property type="project" value="EnsemblMetazoa"/>
</dbReference>
<dbReference type="CDD" id="cd07067">
    <property type="entry name" value="HP_PGM_like"/>
    <property type="match status" value="1"/>
</dbReference>
<dbReference type="FunFam" id="3.40.50.1240:FF:000009">
    <property type="entry name" value="serine/threonine-protein phosphatase PGAM5, mitochondrial isoform X1"/>
    <property type="match status" value="1"/>
</dbReference>
<dbReference type="Gene3D" id="3.40.50.1240">
    <property type="entry name" value="Phosphoglycerate mutase-like"/>
    <property type="match status" value="1"/>
</dbReference>
<dbReference type="InterPro" id="IPR013078">
    <property type="entry name" value="His_Pase_superF_clade-1"/>
</dbReference>
<dbReference type="InterPro" id="IPR029033">
    <property type="entry name" value="His_PPase_superfam"/>
</dbReference>
<dbReference type="InterPro" id="IPR051021">
    <property type="entry name" value="Mito_Ser/Thr_phosphatase"/>
</dbReference>
<dbReference type="PANTHER" id="PTHR20935">
    <property type="entry name" value="PHOSPHOGLYCERATE MUTASE-RELATED"/>
    <property type="match status" value="1"/>
</dbReference>
<dbReference type="PANTHER" id="PTHR20935:SF0">
    <property type="entry name" value="SERINE_THREONINE-PROTEIN PHOSPHATASE PGAM5, MITOCHONDRIAL"/>
    <property type="match status" value="1"/>
</dbReference>
<dbReference type="Pfam" id="PF00300">
    <property type="entry name" value="His_Phos_1"/>
    <property type="match status" value="2"/>
</dbReference>
<dbReference type="SMART" id="SM00855">
    <property type="entry name" value="PGAM"/>
    <property type="match status" value="1"/>
</dbReference>
<dbReference type="SUPFAM" id="SSF53254">
    <property type="entry name" value="Phosphoglycerate mutase-like"/>
    <property type="match status" value="1"/>
</dbReference>
<reference evidence="4" key="1">
    <citation type="journal article" date="2007" name="Nature">
        <title>Evolution of genes and genomes on the Drosophila phylogeny.</title>
        <authorList>
            <consortium name="Drosophila 12 genomes consortium"/>
        </authorList>
    </citation>
    <scope>NUCLEOTIDE SEQUENCE [LARGE SCALE GENOMIC DNA]</scope>
    <source>
        <strain evidence="4">Tucson 14021-0224.01</strain>
    </source>
</reference>
<organism>
    <name type="scientific">Drosophila erecta</name>
    <name type="common">Fruit fly</name>
    <dbReference type="NCBI Taxonomy" id="7220"/>
    <lineage>
        <taxon>Eukaryota</taxon>
        <taxon>Metazoa</taxon>
        <taxon>Ecdysozoa</taxon>
        <taxon>Arthropoda</taxon>
        <taxon>Hexapoda</taxon>
        <taxon>Insecta</taxon>
        <taxon>Pterygota</taxon>
        <taxon>Neoptera</taxon>
        <taxon>Endopterygota</taxon>
        <taxon>Diptera</taxon>
        <taxon>Brachycera</taxon>
        <taxon>Muscomorpha</taxon>
        <taxon>Ephydroidea</taxon>
        <taxon>Drosophilidae</taxon>
        <taxon>Drosophila</taxon>
        <taxon>Sophophora</taxon>
    </lineage>
</organism>
<sequence>MRKLTSFVCGTGAGLAVYYLQRLRDPQATVNNSWTNSEKPVDPWALWDTNWDCREPRALVRPLRNSQPEEENRYNAELEKAKAKKARHIILVRHGEYLDVGDSDDTHHLTERGRKQAEFTGKRLCELGIKWDKVVASTMVRAQETSDIILKQIDFEKEKVVNCAFLREGAPIPPQPPVGHWKPEASQFLRDGSRIEAAFRRYFYRAYPDQEKESYTLIVGHGNVIRYFVCRALQFPAEGWLRISINHASITWLTISPSGNVSIKYLGDSGFMPAELLTHRIPRDAKNVV</sequence>
<protein>
    <recommendedName>
        <fullName evidence="2">Serine/threonine-protein phosphatase Pgam5, mitochondrial</fullName>
        <ecNumber>3.1.3.16</ecNumber>
    </recommendedName>
    <alternativeName>
        <fullName evidence="2">Phosphoglycerate mutase family member 5 homolog</fullName>
    </alternativeName>
</protein>
<gene>
    <name evidence="2" type="primary">Pgam5</name>
    <name type="ORF">GG12675</name>
</gene>
<comment type="function">
    <text evidence="2">Displays phosphatase activity for serine/threonine residues, and dephosphorylates and activates Pk92B kinase. Has apparently no phosphoglycerate mutase activity (By similarity).</text>
</comment>
<comment type="catalytic activity">
    <reaction>
        <text>O-phospho-L-seryl-[protein] + H2O = L-seryl-[protein] + phosphate</text>
        <dbReference type="Rhea" id="RHEA:20629"/>
        <dbReference type="Rhea" id="RHEA-COMP:9863"/>
        <dbReference type="Rhea" id="RHEA-COMP:11604"/>
        <dbReference type="ChEBI" id="CHEBI:15377"/>
        <dbReference type="ChEBI" id="CHEBI:29999"/>
        <dbReference type="ChEBI" id="CHEBI:43474"/>
        <dbReference type="ChEBI" id="CHEBI:83421"/>
        <dbReference type="EC" id="3.1.3.16"/>
    </reaction>
</comment>
<comment type="catalytic activity">
    <reaction>
        <text>O-phospho-L-threonyl-[protein] + H2O = L-threonyl-[protein] + phosphate</text>
        <dbReference type="Rhea" id="RHEA:47004"/>
        <dbReference type="Rhea" id="RHEA-COMP:11060"/>
        <dbReference type="Rhea" id="RHEA-COMP:11605"/>
        <dbReference type="ChEBI" id="CHEBI:15377"/>
        <dbReference type="ChEBI" id="CHEBI:30013"/>
        <dbReference type="ChEBI" id="CHEBI:43474"/>
        <dbReference type="ChEBI" id="CHEBI:61977"/>
        <dbReference type="EC" id="3.1.3.16"/>
    </reaction>
</comment>
<comment type="subunit">
    <text evidence="2">Interacts with Pk92B/ASK1.</text>
</comment>
<comment type="subcellular location">
    <subcellularLocation>
        <location evidence="2 3">Mitochondrion outer membrane</location>
        <topology evidence="1">Single-pass membrane protein</topology>
    </subcellularLocation>
</comment>
<comment type="similarity">
    <text evidence="3">Belongs to the phosphoglycerate mutase family. BPG-dependent PGAM subfamily.</text>
</comment>
<name>PGAM5_DROER</name>
<accession>B3P9N0</accession>
<keyword id="KW-0378">Hydrolase</keyword>
<keyword id="KW-0472">Membrane</keyword>
<keyword id="KW-0496">Mitochondrion</keyword>
<keyword id="KW-1000">Mitochondrion outer membrane</keyword>
<keyword id="KW-0812">Transmembrane</keyword>
<keyword id="KW-1133">Transmembrane helix</keyword>